<accession>Q8K956</accession>
<name>RS3_BUCAP</name>
<evidence type="ECO:0000255" key="1">
    <source>
        <dbReference type="HAMAP-Rule" id="MF_01309"/>
    </source>
</evidence>
<evidence type="ECO:0000305" key="2"/>
<dbReference type="EMBL" id="AE013218">
    <property type="protein sequence ID" value="AAM68042.1"/>
    <property type="molecule type" value="Genomic_DNA"/>
</dbReference>
<dbReference type="RefSeq" id="WP_011054008.1">
    <property type="nucleotide sequence ID" value="NC_004061.1"/>
</dbReference>
<dbReference type="SMR" id="Q8K956"/>
<dbReference type="STRING" id="198804.BUsg_499"/>
<dbReference type="GeneID" id="93003974"/>
<dbReference type="KEGG" id="bas:BUsg_499"/>
<dbReference type="eggNOG" id="COG0092">
    <property type="taxonomic scope" value="Bacteria"/>
</dbReference>
<dbReference type="HOGENOM" id="CLU_058591_0_2_6"/>
<dbReference type="Proteomes" id="UP000000416">
    <property type="component" value="Chromosome"/>
</dbReference>
<dbReference type="GO" id="GO:0022627">
    <property type="term" value="C:cytosolic small ribosomal subunit"/>
    <property type="evidence" value="ECO:0007669"/>
    <property type="project" value="TreeGrafter"/>
</dbReference>
<dbReference type="GO" id="GO:0003729">
    <property type="term" value="F:mRNA binding"/>
    <property type="evidence" value="ECO:0007669"/>
    <property type="project" value="UniProtKB-UniRule"/>
</dbReference>
<dbReference type="GO" id="GO:0019843">
    <property type="term" value="F:rRNA binding"/>
    <property type="evidence" value="ECO:0007669"/>
    <property type="project" value="UniProtKB-UniRule"/>
</dbReference>
<dbReference type="GO" id="GO:0003735">
    <property type="term" value="F:structural constituent of ribosome"/>
    <property type="evidence" value="ECO:0007669"/>
    <property type="project" value="InterPro"/>
</dbReference>
<dbReference type="GO" id="GO:0006412">
    <property type="term" value="P:translation"/>
    <property type="evidence" value="ECO:0007669"/>
    <property type="project" value="UniProtKB-UniRule"/>
</dbReference>
<dbReference type="CDD" id="cd02412">
    <property type="entry name" value="KH-II_30S_S3"/>
    <property type="match status" value="1"/>
</dbReference>
<dbReference type="FunFam" id="3.30.1140.32:FF:000001">
    <property type="entry name" value="30S ribosomal protein S3"/>
    <property type="match status" value="1"/>
</dbReference>
<dbReference type="FunFam" id="3.30.300.20:FF:000001">
    <property type="entry name" value="30S ribosomal protein S3"/>
    <property type="match status" value="1"/>
</dbReference>
<dbReference type="Gene3D" id="3.30.300.20">
    <property type="match status" value="1"/>
</dbReference>
<dbReference type="Gene3D" id="3.30.1140.32">
    <property type="entry name" value="Ribosomal protein S3, C-terminal domain"/>
    <property type="match status" value="1"/>
</dbReference>
<dbReference type="HAMAP" id="MF_01309_B">
    <property type="entry name" value="Ribosomal_uS3_B"/>
    <property type="match status" value="1"/>
</dbReference>
<dbReference type="InterPro" id="IPR004087">
    <property type="entry name" value="KH_dom"/>
</dbReference>
<dbReference type="InterPro" id="IPR015946">
    <property type="entry name" value="KH_dom-like_a/b"/>
</dbReference>
<dbReference type="InterPro" id="IPR004044">
    <property type="entry name" value="KH_dom_type_2"/>
</dbReference>
<dbReference type="InterPro" id="IPR009019">
    <property type="entry name" value="KH_sf_prok-type"/>
</dbReference>
<dbReference type="InterPro" id="IPR036419">
    <property type="entry name" value="Ribosomal_S3_C_sf"/>
</dbReference>
<dbReference type="InterPro" id="IPR005704">
    <property type="entry name" value="Ribosomal_uS3_bac-typ"/>
</dbReference>
<dbReference type="InterPro" id="IPR001351">
    <property type="entry name" value="Ribosomal_uS3_C"/>
</dbReference>
<dbReference type="InterPro" id="IPR018280">
    <property type="entry name" value="Ribosomal_uS3_CS"/>
</dbReference>
<dbReference type="NCBIfam" id="TIGR01009">
    <property type="entry name" value="rpsC_bact"/>
    <property type="match status" value="1"/>
</dbReference>
<dbReference type="PANTHER" id="PTHR11760">
    <property type="entry name" value="30S/40S RIBOSOMAL PROTEIN S3"/>
    <property type="match status" value="1"/>
</dbReference>
<dbReference type="PANTHER" id="PTHR11760:SF19">
    <property type="entry name" value="SMALL RIBOSOMAL SUBUNIT PROTEIN US3C"/>
    <property type="match status" value="1"/>
</dbReference>
<dbReference type="Pfam" id="PF07650">
    <property type="entry name" value="KH_2"/>
    <property type="match status" value="1"/>
</dbReference>
<dbReference type="Pfam" id="PF00189">
    <property type="entry name" value="Ribosomal_S3_C"/>
    <property type="match status" value="1"/>
</dbReference>
<dbReference type="SMART" id="SM00322">
    <property type="entry name" value="KH"/>
    <property type="match status" value="1"/>
</dbReference>
<dbReference type="SUPFAM" id="SSF54814">
    <property type="entry name" value="Prokaryotic type KH domain (KH-domain type II)"/>
    <property type="match status" value="1"/>
</dbReference>
<dbReference type="SUPFAM" id="SSF54821">
    <property type="entry name" value="Ribosomal protein S3 C-terminal domain"/>
    <property type="match status" value="1"/>
</dbReference>
<dbReference type="PROSITE" id="PS50823">
    <property type="entry name" value="KH_TYPE_2"/>
    <property type="match status" value="1"/>
</dbReference>
<dbReference type="PROSITE" id="PS00548">
    <property type="entry name" value="RIBOSOMAL_S3"/>
    <property type="match status" value="1"/>
</dbReference>
<organism>
    <name type="scientific">Buchnera aphidicola subsp. Schizaphis graminum (strain Sg)</name>
    <dbReference type="NCBI Taxonomy" id="198804"/>
    <lineage>
        <taxon>Bacteria</taxon>
        <taxon>Pseudomonadati</taxon>
        <taxon>Pseudomonadota</taxon>
        <taxon>Gammaproteobacteria</taxon>
        <taxon>Enterobacterales</taxon>
        <taxon>Erwiniaceae</taxon>
        <taxon>Buchnera</taxon>
    </lineage>
</organism>
<gene>
    <name evidence="1" type="primary">rpsC</name>
    <name type="ordered locus">BUsg_499</name>
</gene>
<keyword id="KW-0687">Ribonucleoprotein</keyword>
<keyword id="KW-0689">Ribosomal protein</keyword>
<keyword id="KW-0694">RNA-binding</keyword>
<keyword id="KW-0699">rRNA-binding</keyword>
<proteinExistence type="inferred from homology"/>
<reference key="1">
    <citation type="journal article" date="2002" name="Science">
        <title>50 million years of genomic stasis in endosymbiotic bacteria.</title>
        <authorList>
            <person name="Tamas I."/>
            <person name="Klasson L."/>
            <person name="Canbaeck B."/>
            <person name="Naeslund A.K."/>
            <person name="Eriksson A.-S."/>
            <person name="Wernegreen J.J."/>
            <person name="Sandstroem J.P."/>
            <person name="Moran N.A."/>
            <person name="Andersson S.G.E."/>
        </authorList>
    </citation>
    <scope>NUCLEOTIDE SEQUENCE [LARGE SCALE GENOMIC DNA]</scope>
    <source>
        <strain>Sg</strain>
    </source>
</reference>
<protein>
    <recommendedName>
        <fullName evidence="1">Small ribosomal subunit protein uS3</fullName>
    </recommendedName>
    <alternativeName>
        <fullName evidence="2">30S ribosomal protein S3</fullName>
    </alternativeName>
</protein>
<sequence length="233" mass="26530">MGQKVHPNGMRLGIIKKWNSVWFANTKDFADHLDSDYKVRQFLMKKLVKASVSRIIIERPAKSIRVTIYTARPGIVIGKKGEDVEKLRINIAKITGVPAQINISEVRKPELDAKLVSESITSQLERRVMFRRAMKRSVQNAMRQGAKGIKVEVSGRLGGAEIARREWYREGRVPLHTLRANIDYSISEAHTTYGVIGVKVWIFKGEILGGMSTIEKLEKSSIQIKKQHRKNRK</sequence>
<feature type="chain" id="PRO_0000130089" description="Small ribosomal subunit protein uS3">
    <location>
        <begin position="1"/>
        <end position="233"/>
    </location>
</feature>
<feature type="domain" description="KH type-2" evidence="1">
    <location>
        <begin position="39"/>
        <end position="107"/>
    </location>
</feature>
<comment type="function">
    <text evidence="1">Binds the lower part of the 30S subunit head. Binds mRNA in the 70S ribosome, positioning it for translation.</text>
</comment>
<comment type="subunit">
    <text evidence="1">Part of the 30S ribosomal subunit. Forms a tight complex with proteins S10 and S14.</text>
</comment>
<comment type="similarity">
    <text evidence="1">Belongs to the universal ribosomal protein uS3 family.</text>
</comment>